<evidence type="ECO:0000255" key="1">
    <source>
        <dbReference type="HAMAP-Rule" id="MF_00456"/>
    </source>
</evidence>
<protein>
    <recommendedName>
        <fullName evidence="1">Glutamate 5-kinase</fullName>
        <ecNumber evidence="1">2.7.2.11</ecNumber>
    </recommendedName>
    <alternativeName>
        <fullName evidence="1">Gamma-glutamyl kinase</fullName>
        <shortName evidence="1">GK</shortName>
    </alternativeName>
</protein>
<organism>
    <name type="scientific">Thermotoga maritima (strain ATCC 43589 / DSM 3109 / JCM 10099 / NBRC 100826 / MSB8)</name>
    <dbReference type="NCBI Taxonomy" id="243274"/>
    <lineage>
        <taxon>Bacteria</taxon>
        <taxon>Thermotogati</taxon>
        <taxon>Thermotogota</taxon>
        <taxon>Thermotogae</taxon>
        <taxon>Thermotogales</taxon>
        <taxon>Thermotogaceae</taxon>
        <taxon>Thermotoga</taxon>
    </lineage>
</organism>
<feature type="chain" id="PRO_0000109746" description="Glutamate 5-kinase">
    <location>
        <begin position="1"/>
        <end position="353"/>
    </location>
</feature>
<feature type="domain" description="PUA" evidence="1">
    <location>
        <begin position="262"/>
        <end position="339"/>
    </location>
</feature>
<feature type="binding site" evidence="1">
    <location>
        <position position="8"/>
    </location>
    <ligand>
        <name>ATP</name>
        <dbReference type="ChEBI" id="CHEBI:30616"/>
    </ligand>
</feature>
<feature type="binding site" evidence="1">
    <location>
        <position position="47"/>
    </location>
    <ligand>
        <name>substrate</name>
    </ligand>
</feature>
<feature type="binding site" evidence="1">
    <location>
        <position position="134"/>
    </location>
    <ligand>
        <name>substrate</name>
    </ligand>
</feature>
<feature type="binding site" evidence="1">
    <location>
        <position position="146"/>
    </location>
    <ligand>
        <name>substrate</name>
    </ligand>
</feature>
<feature type="binding site" evidence="1">
    <location>
        <begin position="198"/>
        <end position="204"/>
    </location>
    <ligand>
        <name>ATP</name>
        <dbReference type="ChEBI" id="CHEBI:30616"/>
    </ligand>
</feature>
<accession>Q9WYD0</accession>
<dbReference type="EC" id="2.7.2.11" evidence="1"/>
<dbReference type="EMBL" id="AE000512">
    <property type="protein sequence ID" value="AAD35382.1"/>
    <property type="molecule type" value="Genomic_DNA"/>
</dbReference>
<dbReference type="PIR" id="F72394">
    <property type="entry name" value="F72394"/>
</dbReference>
<dbReference type="RefSeq" id="NP_228106.1">
    <property type="nucleotide sequence ID" value="NC_000853.1"/>
</dbReference>
<dbReference type="SMR" id="Q9WYD0"/>
<dbReference type="FunCoup" id="Q9WYD0">
    <property type="interactions" value="274"/>
</dbReference>
<dbReference type="STRING" id="243274.TM_0294"/>
<dbReference type="PaxDb" id="243274-THEMA_03255"/>
<dbReference type="EnsemblBacteria" id="AAD35382">
    <property type="protein sequence ID" value="AAD35382"/>
    <property type="gene ID" value="TM_0294"/>
</dbReference>
<dbReference type="KEGG" id="tma:TM0294"/>
<dbReference type="PATRIC" id="fig|243274.5.peg.299"/>
<dbReference type="eggNOG" id="COG0263">
    <property type="taxonomic scope" value="Bacteria"/>
</dbReference>
<dbReference type="InParanoid" id="Q9WYD0"/>
<dbReference type="OrthoDB" id="9804434at2"/>
<dbReference type="UniPathway" id="UPA00098">
    <property type="reaction ID" value="UER00359"/>
</dbReference>
<dbReference type="Proteomes" id="UP000008183">
    <property type="component" value="Chromosome"/>
</dbReference>
<dbReference type="GO" id="GO:0005829">
    <property type="term" value="C:cytosol"/>
    <property type="evidence" value="ECO:0000318"/>
    <property type="project" value="GO_Central"/>
</dbReference>
<dbReference type="GO" id="GO:0005524">
    <property type="term" value="F:ATP binding"/>
    <property type="evidence" value="ECO:0007669"/>
    <property type="project" value="UniProtKB-KW"/>
</dbReference>
<dbReference type="GO" id="GO:0004349">
    <property type="term" value="F:glutamate 5-kinase activity"/>
    <property type="evidence" value="ECO:0000318"/>
    <property type="project" value="GO_Central"/>
</dbReference>
<dbReference type="GO" id="GO:0003723">
    <property type="term" value="F:RNA binding"/>
    <property type="evidence" value="ECO:0007669"/>
    <property type="project" value="InterPro"/>
</dbReference>
<dbReference type="GO" id="GO:0055129">
    <property type="term" value="P:L-proline biosynthetic process"/>
    <property type="evidence" value="ECO:0007669"/>
    <property type="project" value="UniProtKB-UniRule"/>
</dbReference>
<dbReference type="GO" id="GO:0006561">
    <property type="term" value="P:proline biosynthetic process"/>
    <property type="evidence" value="ECO:0000318"/>
    <property type="project" value="GO_Central"/>
</dbReference>
<dbReference type="CDD" id="cd04242">
    <property type="entry name" value="AAK_G5K_ProB"/>
    <property type="match status" value="1"/>
</dbReference>
<dbReference type="CDD" id="cd21157">
    <property type="entry name" value="PUA_G5K"/>
    <property type="match status" value="1"/>
</dbReference>
<dbReference type="FunFam" id="2.30.130.10:FF:000007">
    <property type="entry name" value="Glutamate 5-kinase"/>
    <property type="match status" value="1"/>
</dbReference>
<dbReference type="FunFam" id="3.40.1160.10:FF:000040">
    <property type="entry name" value="Glutamate 5-kinase"/>
    <property type="match status" value="1"/>
</dbReference>
<dbReference type="Gene3D" id="3.40.1160.10">
    <property type="entry name" value="Acetylglutamate kinase-like"/>
    <property type="match status" value="1"/>
</dbReference>
<dbReference type="Gene3D" id="2.30.130.10">
    <property type="entry name" value="PUA domain"/>
    <property type="match status" value="1"/>
</dbReference>
<dbReference type="HAMAP" id="MF_00456">
    <property type="entry name" value="ProB"/>
    <property type="match status" value="1"/>
</dbReference>
<dbReference type="InterPro" id="IPR036393">
    <property type="entry name" value="AceGlu_kinase-like_sf"/>
</dbReference>
<dbReference type="InterPro" id="IPR001048">
    <property type="entry name" value="Asp/Glu/Uridylate_kinase"/>
</dbReference>
<dbReference type="InterPro" id="IPR041739">
    <property type="entry name" value="G5K_ProB"/>
</dbReference>
<dbReference type="InterPro" id="IPR001057">
    <property type="entry name" value="Glu/AcGlu_kinase"/>
</dbReference>
<dbReference type="InterPro" id="IPR011529">
    <property type="entry name" value="Glu_5kinase"/>
</dbReference>
<dbReference type="InterPro" id="IPR005715">
    <property type="entry name" value="Glu_5kinase/COase_Synthase"/>
</dbReference>
<dbReference type="InterPro" id="IPR019797">
    <property type="entry name" value="Glutamate_5-kinase_CS"/>
</dbReference>
<dbReference type="InterPro" id="IPR002478">
    <property type="entry name" value="PUA"/>
</dbReference>
<dbReference type="InterPro" id="IPR015947">
    <property type="entry name" value="PUA-like_sf"/>
</dbReference>
<dbReference type="InterPro" id="IPR036974">
    <property type="entry name" value="PUA_sf"/>
</dbReference>
<dbReference type="NCBIfam" id="TIGR01027">
    <property type="entry name" value="proB"/>
    <property type="match status" value="1"/>
</dbReference>
<dbReference type="PANTHER" id="PTHR43654">
    <property type="entry name" value="GLUTAMATE 5-KINASE"/>
    <property type="match status" value="1"/>
</dbReference>
<dbReference type="PANTHER" id="PTHR43654:SF1">
    <property type="entry name" value="ISOPENTENYL PHOSPHATE KINASE"/>
    <property type="match status" value="1"/>
</dbReference>
<dbReference type="Pfam" id="PF00696">
    <property type="entry name" value="AA_kinase"/>
    <property type="match status" value="1"/>
</dbReference>
<dbReference type="Pfam" id="PF01472">
    <property type="entry name" value="PUA"/>
    <property type="match status" value="1"/>
</dbReference>
<dbReference type="PIRSF" id="PIRSF000729">
    <property type="entry name" value="GK"/>
    <property type="match status" value="1"/>
</dbReference>
<dbReference type="PRINTS" id="PR00474">
    <property type="entry name" value="GLU5KINASE"/>
</dbReference>
<dbReference type="SMART" id="SM00359">
    <property type="entry name" value="PUA"/>
    <property type="match status" value="1"/>
</dbReference>
<dbReference type="SUPFAM" id="SSF53633">
    <property type="entry name" value="Carbamate kinase-like"/>
    <property type="match status" value="1"/>
</dbReference>
<dbReference type="SUPFAM" id="SSF88697">
    <property type="entry name" value="PUA domain-like"/>
    <property type="match status" value="1"/>
</dbReference>
<dbReference type="PROSITE" id="PS00902">
    <property type="entry name" value="GLUTAMATE_5_KINASE"/>
    <property type="match status" value="1"/>
</dbReference>
<dbReference type="PROSITE" id="PS50890">
    <property type="entry name" value="PUA"/>
    <property type="match status" value="1"/>
</dbReference>
<comment type="function">
    <text evidence="1">Catalyzes the transfer of a phosphate group to glutamate to form L-glutamate 5-phosphate.</text>
</comment>
<comment type="catalytic activity">
    <reaction evidence="1">
        <text>L-glutamate + ATP = L-glutamyl 5-phosphate + ADP</text>
        <dbReference type="Rhea" id="RHEA:14877"/>
        <dbReference type="ChEBI" id="CHEBI:29985"/>
        <dbReference type="ChEBI" id="CHEBI:30616"/>
        <dbReference type="ChEBI" id="CHEBI:58274"/>
        <dbReference type="ChEBI" id="CHEBI:456216"/>
        <dbReference type="EC" id="2.7.2.11"/>
    </reaction>
</comment>
<comment type="pathway">
    <text evidence="1">Amino-acid biosynthesis; L-proline biosynthesis; L-glutamate 5-semialdehyde from L-glutamate: step 1/2.</text>
</comment>
<comment type="subcellular location">
    <subcellularLocation>
        <location evidence="1">Cytoplasm</location>
    </subcellularLocation>
</comment>
<comment type="similarity">
    <text evidence="1">Belongs to the glutamate 5-kinase family.</text>
</comment>
<reference key="1">
    <citation type="journal article" date="1999" name="Nature">
        <title>Evidence for lateral gene transfer between Archaea and Bacteria from genome sequence of Thermotoga maritima.</title>
        <authorList>
            <person name="Nelson K.E."/>
            <person name="Clayton R.A."/>
            <person name="Gill S.R."/>
            <person name="Gwinn M.L."/>
            <person name="Dodson R.J."/>
            <person name="Haft D.H."/>
            <person name="Hickey E.K."/>
            <person name="Peterson J.D."/>
            <person name="Nelson W.C."/>
            <person name="Ketchum K.A."/>
            <person name="McDonald L.A."/>
            <person name="Utterback T.R."/>
            <person name="Malek J.A."/>
            <person name="Linher K.D."/>
            <person name="Garrett M.M."/>
            <person name="Stewart A.M."/>
            <person name="Cotton M.D."/>
            <person name="Pratt M.S."/>
            <person name="Phillips C.A."/>
            <person name="Richardson D.L."/>
            <person name="Heidelberg J.F."/>
            <person name="Sutton G.G."/>
            <person name="Fleischmann R.D."/>
            <person name="Eisen J.A."/>
            <person name="White O."/>
            <person name="Salzberg S.L."/>
            <person name="Smith H.O."/>
            <person name="Venter J.C."/>
            <person name="Fraser C.M."/>
        </authorList>
    </citation>
    <scope>NUCLEOTIDE SEQUENCE [LARGE SCALE GENOMIC DNA]</scope>
    <source>
        <strain>ATCC 43589 / DSM 3109 / JCM 10099 / NBRC 100826 / MSB8</strain>
    </source>
</reference>
<keyword id="KW-0028">Amino-acid biosynthesis</keyword>
<keyword id="KW-0067">ATP-binding</keyword>
<keyword id="KW-0963">Cytoplasm</keyword>
<keyword id="KW-0418">Kinase</keyword>
<keyword id="KW-0547">Nucleotide-binding</keyword>
<keyword id="KW-0641">Proline biosynthesis</keyword>
<keyword id="KW-1185">Reference proteome</keyword>
<keyword id="KW-0808">Transferase</keyword>
<sequence>MIMKVVVKVGSNLLVGSSGLRKSYIAELCREVARLKSQGHEISIITSGARAAGFTYLGKGKRTQDLHIKQALCAVGQVQLMKVYENAFDFYGIKIAQILLTRDTFSNRKRYLNLRNTLIGLSEFDVVPIVNENDTVATEEITLGDNDTLAAMFSIAWDADFLVLFTTVDGVIDENGKLVERFDESVKLKDMGKSSWGTGGIRSKIESALMASRCGVKATICSGNDVSNLTRFVKGEPVGTVFEPQGRLKAKKAWIAFLSEPAGKIYVNKGAEEALKSGNSLLPVGVTGVEGTFDVGDVVEIVNEEGELVGRGIVNYSSSDLEKIAGHKSSDLKKILGYEGNKVVVHIDNMWVA</sequence>
<proteinExistence type="inferred from homology"/>
<name>PROB_THEMA</name>
<gene>
    <name evidence="1" type="primary">proB</name>
    <name type="ordered locus">TM_0294</name>
</gene>